<sequence>MNLVLNGQDLTIESIKVLIAQDQNVEICEEALSRVKQSRKIVDDIIADQETVYGITTGFGLFSDVLIDQDKYEDLQLNLIRSHACGIGEPFNDDVALVMMILRLNTMLKGHSGVSTALVEQLVFFINQRIFPVIPAQGSLGASGDLAPLSHLALALVGEGEVIYKGVRQESSKVLQSLNRAPHTLQAKEGLALINGTQAMTSQGVISYIEAEQLAYDAEWIAALTHQALNGIVDAYDAHVHIVRNSKEQLSVANRMLDWLEGSSLTTRQGELRVQDAYSLRCIPQIHGASFQVLNYVKEKLECEMNAANDNPLIFDKDDETLVISGGNFHGQPVAFALDFLKIGVSELSNVSERRIERLVNPQLNGDLPAFLSPHPGLQSGAMIMQYAAASLVSENKTLAHPASVDSIPSSANQEDHVSMGTIASRHGYQIVENVRNVLAIECVIALQAVELKGVDKLSQKTKEKYEEYREFVPSITEDRQFHKDIKVVSDYLKRSAYKK</sequence>
<reference key="1">
    <citation type="journal article" date="2009" name="J. Bacteriol.">
        <title>Complete genome sequence of Macrococcus caseolyticus strain JCSCS5402, reflecting the ancestral genome of the human-pathogenic staphylococci.</title>
        <authorList>
            <person name="Baba T."/>
            <person name="Kuwahara-Arai K."/>
            <person name="Uchiyama I."/>
            <person name="Takeuchi F."/>
            <person name="Ito T."/>
            <person name="Hiramatsu K."/>
        </authorList>
    </citation>
    <scope>NUCLEOTIDE SEQUENCE [LARGE SCALE GENOMIC DNA]</scope>
    <source>
        <strain>JCSC5402</strain>
    </source>
</reference>
<evidence type="ECO:0000255" key="1">
    <source>
        <dbReference type="HAMAP-Rule" id="MF_00229"/>
    </source>
</evidence>
<accession>B9E7E0</accession>
<keyword id="KW-0963">Cytoplasm</keyword>
<keyword id="KW-0369">Histidine metabolism</keyword>
<keyword id="KW-0456">Lyase</keyword>
<keyword id="KW-1185">Reference proteome</keyword>
<proteinExistence type="inferred from homology"/>
<comment type="catalytic activity">
    <reaction evidence="1">
        <text>L-histidine = trans-urocanate + NH4(+)</text>
        <dbReference type="Rhea" id="RHEA:21232"/>
        <dbReference type="ChEBI" id="CHEBI:17771"/>
        <dbReference type="ChEBI" id="CHEBI:28938"/>
        <dbReference type="ChEBI" id="CHEBI:57595"/>
        <dbReference type="EC" id="4.3.1.3"/>
    </reaction>
</comment>
<comment type="pathway">
    <text evidence="1">Amino-acid degradation; L-histidine degradation into L-glutamate; N-formimidoyl-L-glutamate from L-histidine: step 1/3.</text>
</comment>
<comment type="subcellular location">
    <subcellularLocation>
        <location evidence="1">Cytoplasm</location>
    </subcellularLocation>
</comment>
<comment type="PTM">
    <text evidence="1">Contains an active site 4-methylidene-imidazol-5-one (MIO), which is formed autocatalytically by cyclization and dehydration of residues Ala-Ser-Gly.</text>
</comment>
<comment type="similarity">
    <text evidence="1">Belongs to the PAL/histidase family.</text>
</comment>
<name>HUTH_MACCJ</name>
<protein>
    <recommendedName>
        <fullName evidence="1">Histidine ammonia-lyase</fullName>
        <shortName evidence="1">Histidase</shortName>
        <ecNumber evidence="1">4.3.1.3</ecNumber>
    </recommendedName>
</protein>
<dbReference type="EC" id="4.3.1.3" evidence="1"/>
<dbReference type="EMBL" id="AP009484">
    <property type="protein sequence ID" value="BAH18108.1"/>
    <property type="molecule type" value="Genomic_DNA"/>
</dbReference>
<dbReference type="RefSeq" id="WP_012657306.1">
    <property type="nucleotide sequence ID" value="NC_011999.1"/>
</dbReference>
<dbReference type="SMR" id="B9E7E0"/>
<dbReference type="STRING" id="458233.MCCL_1401"/>
<dbReference type="KEGG" id="mcl:MCCL_1401"/>
<dbReference type="eggNOG" id="COG2986">
    <property type="taxonomic scope" value="Bacteria"/>
</dbReference>
<dbReference type="HOGENOM" id="CLU_014801_4_0_9"/>
<dbReference type="OrthoDB" id="9806955at2"/>
<dbReference type="UniPathway" id="UPA00379">
    <property type="reaction ID" value="UER00549"/>
</dbReference>
<dbReference type="Proteomes" id="UP000001383">
    <property type="component" value="Chromosome"/>
</dbReference>
<dbReference type="GO" id="GO:0005737">
    <property type="term" value="C:cytoplasm"/>
    <property type="evidence" value="ECO:0007669"/>
    <property type="project" value="UniProtKB-SubCell"/>
</dbReference>
<dbReference type="GO" id="GO:0004397">
    <property type="term" value="F:histidine ammonia-lyase activity"/>
    <property type="evidence" value="ECO:0007669"/>
    <property type="project" value="UniProtKB-UniRule"/>
</dbReference>
<dbReference type="GO" id="GO:0019556">
    <property type="term" value="P:L-histidine catabolic process to glutamate and formamide"/>
    <property type="evidence" value="ECO:0007669"/>
    <property type="project" value="UniProtKB-UniPathway"/>
</dbReference>
<dbReference type="GO" id="GO:0019557">
    <property type="term" value="P:L-histidine catabolic process to glutamate and formate"/>
    <property type="evidence" value="ECO:0007669"/>
    <property type="project" value="UniProtKB-UniPathway"/>
</dbReference>
<dbReference type="CDD" id="cd00332">
    <property type="entry name" value="PAL-HAL"/>
    <property type="match status" value="1"/>
</dbReference>
<dbReference type="FunFam" id="1.10.275.10:FF:000008">
    <property type="entry name" value="Histidine ammonia-lyase"/>
    <property type="match status" value="1"/>
</dbReference>
<dbReference type="FunFam" id="1.20.200.10:FF:000003">
    <property type="entry name" value="Histidine ammonia-lyase"/>
    <property type="match status" value="1"/>
</dbReference>
<dbReference type="Gene3D" id="1.20.200.10">
    <property type="entry name" value="Fumarase/aspartase (Central domain)"/>
    <property type="match status" value="1"/>
</dbReference>
<dbReference type="Gene3D" id="1.10.275.10">
    <property type="entry name" value="Fumarase/aspartase (N-terminal domain)"/>
    <property type="match status" value="1"/>
</dbReference>
<dbReference type="HAMAP" id="MF_00229">
    <property type="entry name" value="His_ammonia_lyase"/>
    <property type="match status" value="1"/>
</dbReference>
<dbReference type="InterPro" id="IPR001106">
    <property type="entry name" value="Aromatic_Lyase"/>
</dbReference>
<dbReference type="InterPro" id="IPR024083">
    <property type="entry name" value="Fumarase/histidase_N"/>
</dbReference>
<dbReference type="InterPro" id="IPR005921">
    <property type="entry name" value="HutH"/>
</dbReference>
<dbReference type="InterPro" id="IPR008948">
    <property type="entry name" value="L-Aspartase-like"/>
</dbReference>
<dbReference type="InterPro" id="IPR022313">
    <property type="entry name" value="Phe/His_NH3-lyase_AS"/>
</dbReference>
<dbReference type="NCBIfam" id="TIGR01225">
    <property type="entry name" value="hutH"/>
    <property type="match status" value="1"/>
</dbReference>
<dbReference type="NCBIfam" id="NF006871">
    <property type="entry name" value="PRK09367.1"/>
    <property type="match status" value="1"/>
</dbReference>
<dbReference type="PANTHER" id="PTHR10362">
    <property type="entry name" value="HISTIDINE AMMONIA-LYASE"/>
    <property type="match status" value="1"/>
</dbReference>
<dbReference type="Pfam" id="PF00221">
    <property type="entry name" value="Lyase_aromatic"/>
    <property type="match status" value="1"/>
</dbReference>
<dbReference type="SUPFAM" id="SSF48557">
    <property type="entry name" value="L-aspartase-like"/>
    <property type="match status" value="1"/>
</dbReference>
<dbReference type="PROSITE" id="PS00488">
    <property type="entry name" value="PAL_HISTIDASE"/>
    <property type="match status" value="1"/>
</dbReference>
<feature type="chain" id="PRO_1000125094" description="Histidine ammonia-lyase">
    <location>
        <begin position="1"/>
        <end position="500"/>
    </location>
</feature>
<feature type="modified residue" description="2,3-didehydroalanine (Ser)" evidence="1">
    <location>
        <position position="143"/>
    </location>
</feature>
<feature type="cross-link" description="5-imidazolinone (Ala-Gly)" evidence="1">
    <location>
        <begin position="142"/>
        <end position="144"/>
    </location>
</feature>
<gene>
    <name evidence="1" type="primary">hutH</name>
    <name type="ordered locus">MCCL_1401</name>
</gene>
<organism>
    <name type="scientific">Macrococcus caseolyticus (strain JCSC5402)</name>
    <name type="common">Macrococcoides caseolyticum</name>
    <dbReference type="NCBI Taxonomy" id="458233"/>
    <lineage>
        <taxon>Bacteria</taxon>
        <taxon>Bacillati</taxon>
        <taxon>Bacillota</taxon>
        <taxon>Bacilli</taxon>
        <taxon>Bacillales</taxon>
        <taxon>Staphylococcaceae</taxon>
        <taxon>Macrococcoides</taxon>
    </lineage>
</organism>